<accession>A0LN56</accession>
<evidence type="ECO:0000255" key="1">
    <source>
        <dbReference type="HAMAP-Rule" id="MF_00503"/>
    </source>
</evidence>
<evidence type="ECO:0000305" key="2"/>
<keyword id="KW-1185">Reference proteome</keyword>
<keyword id="KW-0687">Ribonucleoprotein</keyword>
<keyword id="KW-0689">Ribosomal protein</keyword>
<keyword id="KW-0694">RNA-binding</keyword>
<keyword id="KW-0699">rRNA-binding</keyword>
<name>RL9_SYNFM</name>
<sequence length="148" mass="16397">MKVILTENLSSLGQIGQVVNVAPGYARNYLFPQGLALEATGKNVKELDHRKRVLAAKREKIRQEMLSVAEKINQVKLVLRRKVADEDKLYGSVSAADIQSALEERGFIVARKDIQLDQPIKQLGEFTVSVRVDAQIAATVGVVVEKEE</sequence>
<comment type="function">
    <text evidence="1">Binds to the 23S rRNA.</text>
</comment>
<comment type="similarity">
    <text evidence="1">Belongs to the bacterial ribosomal protein bL9 family.</text>
</comment>
<proteinExistence type="inferred from homology"/>
<feature type="chain" id="PRO_1000014875" description="Large ribosomal subunit protein bL9">
    <location>
        <begin position="1"/>
        <end position="148"/>
    </location>
</feature>
<gene>
    <name evidence="1" type="primary">rplI</name>
    <name type="ordered locus">Sfum_3185</name>
</gene>
<reference key="1">
    <citation type="submission" date="2006-10" db="EMBL/GenBank/DDBJ databases">
        <title>Complete sequence of Syntrophobacter fumaroxidans MPOB.</title>
        <authorList>
            <consortium name="US DOE Joint Genome Institute"/>
            <person name="Copeland A."/>
            <person name="Lucas S."/>
            <person name="Lapidus A."/>
            <person name="Barry K."/>
            <person name="Detter J.C."/>
            <person name="Glavina del Rio T."/>
            <person name="Hammon N."/>
            <person name="Israni S."/>
            <person name="Pitluck S."/>
            <person name="Goltsman E.G."/>
            <person name="Martinez M."/>
            <person name="Schmutz J."/>
            <person name="Larimer F."/>
            <person name="Land M."/>
            <person name="Hauser L."/>
            <person name="Kyrpides N."/>
            <person name="Kim E."/>
            <person name="Boone D.R."/>
            <person name="Brockman F."/>
            <person name="Culley D."/>
            <person name="Ferry J."/>
            <person name="Gunsalus R."/>
            <person name="McInerney M.J."/>
            <person name="Morrison M."/>
            <person name="Plugge C."/>
            <person name="Rohlin L."/>
            <person name="Scholten J."/>
            <person name="Sieber J."/>
            <person name="Stams A.J.M."/>
            <person name="Worm P."/>
            <person name="Henstra A.M."/>
            <person name="Richardson P."/>
        </authorList>
    </citation>
    <scope>NUCLEOTIDE SEQUENCE [LARGE SCALE GENOMIC DNA]</scope>
    <source>
        <strain>DSM 10017 / MPOB</strain>
    </source>
</reference>
<organism>
    <name type="scientific">Syntrophobacter fumaroxidans (strain DSM 10017 / MPOB)</name>
    <dbReference type="NCBI Taxonomy" id="335543"/>
    <lineage>
        <taxon>Bacteria</taxon>
        <taxon>Pseudomonadati</taxon>
        <taxon>Thermodesulfobacteriota</taxon>
        <taxon>Syntrophobacteria</taxon>
        <taxon>Syntrophobacterales</taxon>
        <taxon>Syntrophobacteraceae</taxon>
        <taxon>Syntrophobacter</taxon>
    </lineage>
</organism>
<dbReference type="EMBL" id="CP000478">
    <property type="protein sequence ID" value="ABK18858.1"/>
    <property type="molecule type" value="Genomic_DNA"/>
</dbReference>
<dbReference type="SMR" id="A0LN56"/>
<dbReference type="FunCoup" id="A0LN56">
    <property type="interactions" value="690"/>
</dbReference>
<dbReference type="STRING" id="335543.Sfum_3185"/>
<dbReference type="KEGG" id="sfu:Sfum_3185"/>
<dbReference type="eggNOG" id="COG0359">
    <property type="taxonomic scope" value="Bacteria"/>
</dbReference>
<dbReference type="HOGENOM" id="CLU_078938_3_0_7"/>
<dbReference type="InParanoid" id="A0LN56"/>
<dbReference type="OrthoDB" id="9788336at2"/>
<dbReference type="Proteomes" id="UP000001784">
    <property type="component" value="Chromosome"/>
</dbReference>
<dbReference type="GO" id="GO:1990904">
    <property type="term" value="C:ribonucleoprotein complex"/>
    <property type="evidence" value="ECO:0007669"/>
    <property type="project" value="UniProtKB-KW"/>
</dbReference>
<dbReference type="GO" id="GO:0005840">
    <property type="term" value="C:ribosome"/>
    <property type="evidence" value="ECO:0007669"/>
    <property type="project" value="UniProtKB-KW"/>
</dbReference>
<dbReference type="GO" id="GO:0019843">
    <property type="term" value="F:rRNA binding"/>
    <property type="evidence" value="ECO:0007669"/>
    <property type="project" value="UniProtKB-UniRule"/>
</dbReference>
<dbReference type="GO" id="GO:0003735">
    <property type="term" value="F:structural constituent of ribosome"/>
    <property type="evidence" value="ECO:0007669"/>
    <property type="project" value="InterPro"/>
</dbReference>
<dbReference type="GO" id="GO:0006412">
    <property type="term" value="P:translation"/>
    <property type="evidence" value="ECO:0007669"/>
    <property type="project" value="UniProtKB-UniRule"/>
</dbReference>
<dbReference type="Gene3D" id="3.10.430.100">
    <property type="entry name" value="Ribosomal protein L9, C-terminal domain"/>
    <property type="match status" value="1"/>
</dbReference>
<dbReference type="Gene3D" id="3.40.5.10">
    <property type="entry name" value="Ribosomal protein L9, N-terminal domain"/>
    <property type="match status" value="1"/>
</dbReference>
<dbReference type="HAMAP" id="MF_00503">
    <property type="entry name" value="Ribosomal_bL9"/>
    <property type="match status" value="1"/>
</dbReference>
<dbReference type="InterPro" id="IPR000244">
    <property type="entry name" value="Ribosomal_bL9"/>
</dbReference>
<dbReference type="InterPro" id="IPR009027">
    <property type="entry name" value="Ribosomal_bL9/RNase_H1_N"/>
</dbReference>
<dbReference type="InterPro" id="IPR020594">
    <property type="entry name" value="Ribosomal_bL9_bac/chp"/>
</dbReference>
<dbReference type="InterPro" id="IPR020069">
    <property type="entry name" value="Ribosomal_bL9_C"/>
</dbReference>
<dbReference type="InterPro" id="IPR036791">
    <property type="entry name" value="Ribosomal_bL9_C_sf"/>
</dbReference>
<dbReference type="InterPro" id="IPR020070">
    <property type="entry name" value="Ribosomal_bL9_N"/>
</dbReference>
<dbReference type="InterPro" id="IPR036935">
    <property type="entry name" value="Ribosomal_bL9_N_sf"/>
</dbReference>
<dbReference type="NCBIfam" id="TIGR00158">
    <property type="entry name" value="L9"/>
    <property type="match status" value="1"/>
</dbReference>
<dbReference type="PANTHER" id="PTHR21368">
    <property type="entry name" value="50S RIBOSOMAL PROTEIN L9"/>
    <property type="match status" value="1"/>
</dbReference>
<dbReference type="Pfam" id="PF03948">
    <property type="entry name" value="Ribosomal_L9_C"/>
    <property type="match status" value="1"/>
</dbReference>
<dbReference type="Pfam" id="PF01281">
    <property type="entry name" value="Ribosomal_L9_N"/>
    <property type="match status" value="1"/>
</dbReference>
<dbReference type="SUPFAM" id="SSF55658">
    <property type="entry name" value="L9 N-domain-like"/>
    <property type="match status" value="1"/>
</dbReference>
<dbReference type="SUPFAM" id="SSF55653">
    <property type="entry name" value="Ribosomal protein L9 C-domain"/>
    <property type="match status" value="1"/>
</dbReference>
<dbReference type="PROSITE" id="PS00651">
    <property type="entry name" value="RIBOSOMAL_L9"/>
    <property type="match status" value="1"/>
</dbReference>
<protein>
    <recommendedName>
        <fullName evidence="1">Large ribosomal subunit protein bL9</fullName>
    </recommendedName>
    <alternativeName>
        <fullName evidence="2">50S ribosomal protein L9</fullName>
    </alternativeName>
</protein>